<accession>Q7MNY3</accession>
<name>HLDE_VIBVY</name>
<feature type="chain" id="PRO_0000080131" description="Bifunctional protein HldE">
    <location>
        <begin position="1"/>
        <end position="476"/>
    </location>
</feature>
<feature type="region of interest" description="Ribokinase">
    <location>
        <begin position="1"/>
        <end position="318"/>
    </location>
</feature>
<feature type="region of interest" description="Cytidylyltransferase">
    <location>
        <begin position="344"/>
        <end position="476"/>
    </location>
</feature>
<feature type="active site" evidence="1">
    <location>
        <position position="264"/>
    </location>
</feature>
<feature type="binding site" evidence="1">
    <location>
        <begin position="195"/>
        <end position="198"/>
    </location>
    <ligand>
        <name>ATP</name>
        <dbReference type="ChEBI" id="CHEBI:30616"/>
    </ligand>
</feature>
<sequence length="476" mass="50568">MKPILPDYNNAGVLIIGDVMLDRYWYGPTSRISPEAPVPVVKVENNEERPGGAANVAMNIASLGGHARIVGLTGMDEPAKVLTETLNSLKVKCDFVALPEYPTITKLRVMSRGQQLIRLDFEDKFEGTNPELVLTRMERALPHVQAVILSDYAKGALEHVEALIAKARAANVPVFIDPKGTNFEPYRGATLLTPNMSEFEAVVGKVTSDDDLVEKALGLIEKFELGALLVTRSEHGMTLVRPDQKPFHLPTQAKEVYDVTGAGDTVISVLAASVAAGKPLDEACALANAAAGVVVGKLGTSTLSTIELAEAIHGSRDTDFGVIAEAALIDAVKAAQAKGEKVVMTNGCFDILHAGHVSYLNNAAKLGDRLIVAVNTDESVKRLKGPGRPVNPTDRRMAVLAGLGAVDWVVPFSEDTPQRLISEVLPDLLVKGGDYKPEDIAGGKEVIAAGGEVKVLNFEDGCSTTEIIDAIKGGRG</sequence>
<keyword id="KW-0067">ATP-binding</keyword>
<keyword id="KW-0119">Carbohydrate metabolism</keyword>
<keyword id="KW-0418">Kinase</keyword>
<keyword id="KW-0448">Lipopolysaccharide biosynthesis</keyword>
<keyword id="KW-0511">Multifunctional enzyme</keyword>
<keyword id="KW-0547">Nucleotide-binding</keyword>
<keyword id="KW-0548">Nucleotidyltransferase</keyword>
<keyword id="KW-0808">Transferase</keyword>
<reference key="1">
    <citation type="journal article" date="2003" name="Genome Res.">
        <title>Comparative genome analysis of Vibrio vulnificus, a marine pathogen.</title>
        <authorList>
            <person name="Chen C.-Y."/>
            <person name="Wu K.-M."/>
            <person name="Chang Y.-C."/>
            <person name="Chang C.-H."/>
            <person name="Tsai H.-C."/>
            <person name="Liao T.-L."/>
            <person name="Liu Y.-M."/>
            <person name="Chen H.-J."/>
            <person name="Shen A.B.-T."/>
            <person name="Li J.-C."/>
            <person name="Su T.-L."/>
            <person name="Shao C.-P."/>
            <person name="Lee C.-T."/>
            <person name="Hor L.-I."/>
            <person name="Tsai S.-F."/>
        </authorList>
    </citation>
    <scope>NUCLEOTIDE SEQUENCE [LARGE SCALE GENOMIC DNA]</scope>
    <source>
        <strain>YJ016</strain>
    </source>
</reference>
<protein>
    <recommendedName>
        <fullName evidence="1">Bifunctional protein HldE</fullName>
    </recommendedName>
    <domain>
        <recommendedName>
            <fullName evidence="1">D-beta-D-heptose 7-phosphate kinase</fullName>
            <ecNumber evidence="1">2.7.1.167</ecNumber>
        </recommendedName>
        <alternativeName>
            <fullName evidence="1">D-beta-D-heptose 7-phosphotransferase</fullName>
        </alternativeName>
        <alternativeName>
            <fullName evidence="1">D-glycero-beta-D-manno-heptose-7-phosphate kinase</fullName>
        </alternativeName>
    </domain>
    <domain>
        <recommendedName>
            <fullName evidence="1">D-beta-D-heptose 1-phosphate adenylyltransferase</fullName>
            <ecNumber evidence="1">2.7.7.70</ecNumber>
        </recommendedName>
        <alternativeName>
            <fullName evidence="1">D-glycero-beta-D-manno-heptose 1-phosphate adenylyltransferase</fullName>
        </alternativeName>
    </domain>
</protein>
<comment type="function">
    <text evidence="1">Catalyzes the phosphorylation of D-glycero-D-manno-heptose 7-phosphate at the C-1 position to selectively form D-glycero-beta-D-manno-heptose-1,7-bisphosphate.</text>
</comment>
<comment type="function">
    <text evidence="1">Catalyzes the ADP transfer from ATP to D-glycero-beta-D-manno-heptose 1-phosphate, yielding ADP-D-glycero-beta-D-manno-heptose.</text>
</comment>
<comment type="catalytic activity">
    <reaction evidence="1">
        <text>D-glycero-beta-D-manno-heptose 7-phosphate + ATP = D-glycero-beta-D-manno-heptose 1,7-bisphosphate + ADP + H(+)</text>
        <dbReference type="Rhea" id="RHEA:27473"/>
        <dbReference type="ChEBI" id="CHEBI:15378"/>
        <dbReference type="ChEBI" id="CHEBI:30616"/>
        <dbReference type="ChEBI" id="CHEBI:60204"/>
        <dbReference type="ChEBI" id="CHEBI:60208"/>
        <dbReference type="ChEBI" id="CHEBI:456216"/>
        <dbReference type="EC" id="2.7.1.167"/>
    </reaction>
</comment>
<comment type="catalytic activity">
    <reaction evidence="1">
        <text>D-glycero-beta-D-manno-heptose 1-phosphate + ATP + H(+) = ADP-D-glycero-beta-D-manno-heptose + diphosphate</text>
        <dbReference type="Rhea" id="RHEA:27465"/>
        <dbReference type="ChEBI" id="CHEBI:15378"/>
        <dbReference type="ChEBI" id="CHEBI:30616"/>
        <dbReference type="ChEBI" id="CHEBI:33019"/>
        <dbReference type="ChEBI" id="CHEBI:59967"/>
        <dbReference type="ChEBI" id="CHEBI:61593"/>
        <dbReference type="EC" id="2.7.7.70"/>
    </reaction>
</comment>
<comment type="pathway">
    <text evidence="1">Nucleotide-sugar biosynthesis; ADP-L-glycero-beta-D-manno-heptose biosynthesis; ADP-L-glycero-beta-D-manno-heptose from D-glycero-beta-D-manno-heptose 7-phosphate: step 1/4.</text>
</comment>
<comment type="pathway">
    <text evidence="1">Nucleotide-sugar biosynthesis; ADP-L-glycero-beta-D-manno-heptose biosynthesis; ADP-L-glycero-beta-D-manno-heptose from D-glycero-beta-D-manno-heptose 7-phosphate: step 3/4.</text>
</comment>
<comment type="pathway">
    <text>Bacterial outer membrane biogenesis; LPS core biosynthesis.</text>
</comment>
<comment type="subunit">
    <text evidence="1">Homodimer.</text>
</comment>
<comment type="similarity">
    <text evidence="1">In the N-terminal section; belongs to the carbohydrate kinase PfkB family.</text>
</comment>
<comment type="similarity">
    <text evidence="1">In the C-terminal section; belongs to the cytidylyltransferase family.</text>
</comment>
<comment type="sequence caution" evidence="2">
    <conflict type="erroneous initiation">
        <sequence resource="EMBL-CDS" id="BAC93346"/>
    </conflict>
</comment>
<proteinExistence type="inferred from homology"/>
<dbReference type="EC" id="2.7.1.167" evidence="1"/>
<dbReference type="EC" id="2.7.7.70" evidence="1"/>
<dbReference type="EMBL" id="BA000037">
    <property type="protein sequence ID" value="BAC93346.1"/>
    <property type="status" value="ALT_INIT"/>
    <property type="molecule type" value="Genomic_DNA"/>
</dbReference>
<dbReference type="RefSeq" id="WP_013572442.1">
    <property type="nucleotide sequence ID" value="NC_005139.1"/>
</dbReference>
<dbReference type="SMR" id="Q7MNY3"/>
<dbReference type="STRING" id="672.VV93_v1c05220"/>
<dbReference type="KEGG" id="vvy:VV0582"/>
<dbReference type="PATRIC" id="fig|196600.6.peg.601"/>
<dbReference type="eggNOG" id="COG0615">
    <property type="taxonomic scope" value="Bacteria"/>
</dbReference>
<dbReference type="eggNOG" id="COG2870">
    <property type="taxonomic scope" value="Bacteria"/>
</dbReference>
<dbReference type="HOGENOM" id="CLU_021150_2_1_6"/>
<dbReference type="UniPathway" id="UPA00356">
    <property type="reaction ID" value="UER00437"/>
</dbReference>
<dbReference type="UniPathway" id="UPA00356">
    <property type="reaction ID" value="UER00439"/>
</dbReference>
<dbReference type="UniPathway" id="UPA00958"/>
<dbReference type="Proteomes" id="UP000002675">
    <property type="component" value="Chromosome I"/>
</dbReference>
<dbReference type="GO" id="GO:0005829">
    <property type="term" value="C:cytosol"/>
    <property type="evidence" value="ECO:0007669"/>
    <property type="project" value="TreeGrafter"/>
</dbReference>
<dbReference type="GO" id="GO:0005524">
    <property type="term" value="F:ATP binding"/>
    <property type="evidence" value="ECO:0007669"/>
    <property type="project" value="UniProtKB-UniRule"/>
</dbReference>
<dbReference type="GO" id="GO:0033785">
    <property type="term" value="F:heptose 7-phosphate kinase activity"/>
    <property type="evidence" value="ECO:0007669"/>
    <property type="project" value="UniProtKB-UniRule"/>
</dbReference>
<dbReference type="GO" id="GO:0033786">
    <property type="term" value="F:heptose-1-phosphate adenylyltransferase activity"/>
    <property type="evidence" value="ECO:0007669"/>
    <property type="project" value="UniProtKB-UniRule"/>
</dbReference>
<dbReference type="GO" id="GO:0016773">
    <property type="term" value="F:phosphotransferase activity, alcohol group as acceptor"/>
    <property type="evidence" value="ECO:0007669"/>
    <property type="project" value="InterPro"/>
</dbReference>
<dbReference type="GO" id="GO:0097171">
    <property type="term" value="P:ADP-L-glycero-beta-D-manno-heptose biosynthetic process"/>
    <property type="evidence" value="ECO:0007669"/>
    <property type="project" value="UniProtKB-UniPathway"/>
</dbReference>
<dbReference type="GO" id="GO:0009244">
    <property type="term" value="P:lipopolysaccharide core region biosynthetic process"/>
    <property type="evidence" value="ECO:0007669"/>
    <property type="project" value="UniProtKB-UniPathway"/>
</dbReference>
<dbReference type="CDD" id="cd01172">
    <property type="entry name" value="RfaE_like"/>
    <property type="match status" value="1"/>
</dbReference>
<dbReference type="FunFam" id="3.40.1190.20:FF:000002">
    <property type="entry name" value="Bifunctional protein HldE"/>
    <property type="match status" value="1"/>
</dbReference>
<dbReference type="FunFam" id="3.40.50.620:FF:000028">
    <property type="entry name" value="Bifunctional protein HldE"/>
    <property type="match status" value="1"/>
</dbReference>
<dbReference type="Gene3D" id="3.40.1190.20">
    <property type="match status" value="1"/>
</dbReference>
<dbReference type="Gene3D" id="3.40.50.620">
    <property type="entry name" value="HUPs"/>
    <property type="match status" value="1"/>
</dbReference>
<dbReference type="HAMAP" id="MF_01603">
    <property type="entry name" value="HldE"/>
    <property type="match status" value="1"/>
</dbReference>
<dbReference type="InterPro" id="IPR023030">
    <property type="entry name" value="Bifunc_HldE"/>
</dbReference>
<dbReference type="InterPro" id="IPR002173">
    <property type="entry name" value="Carboh/pur_kinase_PfkB_CS"/>
</dbReference>
<dbReference type="InterPro" id="IPR004821">
    <property type="entry name" value="Cyt_trans-like"/>
</dbReference>
<dbReference type="InterPro" id="IPR011611">
    <property type="entry name" value="PfkB_dom"/>
</dbReference>
<dbReference type="InterPro" id="IPR011913">
    <property type="entry name" value="RfaE_dom_I"/>
</dbReference>
<dbReference type="InterPro" id="IPR011914">
    <property type="entry name" value="RfaE_dom_II"/>
</dbReference>
<dbReference type="InterPro" id="IPR029056">
    <property type="entry name" value="Ribokinase-like"/>
</dbReference>
<dbReference type="InterPro" id="IPR014729">
    <property type="entry name" value="Rossmann-like_a/b/a_fold"/>
</dbReference>
<dbReference type="NCBIfam" id="TIGR00125">
    <property type="entry name" value="cyt_tran_rel"/>
    <property type="match status" value="1"/>
</dbReference>
<dbReference type="NCBIfam" id="NF008454">
    <property type="entry name" value="PRK11316.1"/>
    <property type="match status" value="1"/>
</dbReference>
<dbReference type="NCBIfam" id="TIGR02198">
    <property type="entry name" value="rfaE_dom_I"/>
    <property type="match status" value="1"/>
</dbReference>
<dbReference type="NCBIfam" id="TIGR02199">
    <property type="entry name" value="rfaE_dom_II"/>
    <property type="match status" value="1"/>
</dbReference>
<dbReference type="PANTHER" id="PTHR46969">
    <property type="entry name" value="BIFUNCTIONAL PROTEIN HLDE"/>
    <property type="match status" value="1"/>
</dbReference>
<dbReference type="PANTHER" id="PTHR46969:SF1">
    <property type="entry name" value="BIFUNCTIONAL PROTEIN HLDE"/>
    <property type="match status" value="1"/>
</dbReference>
<dbReference type="Pfam" id="PF01467">
    <property type="entry name" value="CTP_transf_like"/>
    <property type="match status" value="1"/>
</dbReference>
<dbReference type="Pfam" id="PF00294">
    <property type="entry name" value="PfkB"/>
    <property type="match status" value="1"/>
</dbReference>
<dbReference type="SUPFAM" id="SSF52374">
    <property type="entry name" value="Nucleotidylyl transferase"/>
    <property type="match status" value="1"/>
</dbReference>
<dbReference type="SUPFAM" id="SSF53613">
    <property type="entry name" value="Ribokinase-like"/>
    <property type="match status" value="1"/>
</dbReference>
<dbReference type="PROSITE" id="PS00583">
    <property type="entry name" value="PFKB_KINASES_1"/>
    <property type="match status" value="1"/>
</dbReference>
<organism>
    <name type="scientific">Vibrio vulnificus (strain YJ016)</name>
    <dbReference type="NCBI Taxonomy" id="196600"/>
    <lineage>
        <taxon>Bacteria</taxon>
        <taxon>Pseudomonadati</taxon>
        <taxon>Pseudomonadota</taxon>
        <taxon>Gammaproteobacteria</taxon>
        <taxon>Vibrionales</taxon>
        <taxon>Vibrionaceae</taxon>
        <taxon>Vibrio</taxon>
    </lineage>
</organism>
<gene>
    <name evidence="1" type="primary">hldE</name>
    <name type="synonym">rfaE</name>
    <name type="ordered locus">VV0582</name>
</gene>
<evidence type="ECO:0000255" key="1">
    <source>
        <dbReference type="HAMAP-Rule" id="MF_01603"/>
    </source>
</evidence>
<evidence type="ECO:0000305" key="2"/>